<feature type="chain" id="PRO_0000337552" description="Elongation factor Tu">
    <location>
        <begin position="1"/>
        <end position="398"/>
    </location>
</feature>
<feature type="domain" description="tr-type G">
    <location>
        <begin position="10"/>
        <end position="207"/>
    </location>
</feature>
<feature type="region of interest" description="G1" evidence="1">
    <location>
        <begin position="19"/>
        <end position="26"/>
    </location>
</feature>
<feature type="region of interest" description="G2" evidence="1">
    <location>
        <begin position="63"/>
        <end position="67"/>
    </location>
</feature>
<feature type="region of interest" description="G3" evidence="1">
    <location>
        <begin position="84"/>
        <end position="87"/>
    </location>
</feature>
<feature type="region of interest" description="G4" evidence="1">
    <location>
        <begin position="139"/>
        <end position="142"/>
    </location>
</feature>
<feature type="region of interest" description="G5" evidence="1">
    <location>
        <begin position="177"/>
        <end position="179"/>
    </location>
</feature>
<feature type="binding site" evidence="2">
    <location>
        <begin position="19"/>
        <end position="26"/>
    </location>
    <ligand>
        <name>GTP</name>
        <dbReference type="ChEBI" id="CHEBI:37565"/>
    </ligand>
</feature>
<feature type="binding site" evidence="2">
    <location>
        <position position="26"/>
    </location>
    <ligand>
        <name>Mg(2+)</name>
        <dbReference type="ChEBI" id="CHEBI:18420"/>
    </ligand>
</feature>
<feature type="binding site" evidence="2">
    <location>
        <begin position="84"/>
        <end position="88"/>
    </location>
    <ligand>
        <name>GTP</name>
        <dbReference type="ChEBI" id="CHEBI:37565"/>
    </ligand>
</feature>
<feature type="binding site" evidence="2">
    <location>
        <begin position="139"/>
        <end position="142"/>
    </location>
    <ligand>
        <name>GTP</name>
        <dbReference type="ChEBI" id="CHEBI:37565"/>
    </ligand>
</feature>
<accession>Q1JHV6</accession>
<keyword id="KW-0963">Cytoplasm</keyword>
<keyword id="KW-0251">Elongation factor</keyword>
<keyword id="KW-0342">GTP-binding</keyword>
<keyword id="KW-0378">Hydrolase</keyword>
<keyword id="KW-0460">Magnesium</keyword>
<keyword id="KW-0479">Metal-binding</keyword>
<keyword id="KW-0547">Nucleotide-binding</keyword>
<keyword id="KW-0648">Protein biosynthesis</keyword>
<proteinExistence type="inferred from homology"/>
<gene>
    <name evidence="2" type="primary">tuf</name>
    <name type="ordered locus">MGAS10270_Spy0502</name>
</gene>
<comment type="function">
    <text evidence="2">GTP hydrolase that promotes the GTP-dependent binding of aminoacyl-tRNA to the A-site of ribosomes during protein biosynthesis.</text>
</comment>
<comment type="catalytic activity">
    <reaction evidence="2">
        <text>GTP + H2O = GDP + phosphate + H(+)</text>
        <dbReference type="Rhea" id="RHEA:19669"/>
        <dbReference type="ChEBI" id="CHEBI:15377"/>
        <dbReference type="ChEBI" id="CHEBI:15378"/>
        <dbReference type="ChEBI" id="CHEBI:37565"/>
        <dbReference type="ChEBI" id="CHEBI:43474"/>
        <dbReference type="ChEBI" id="CHEBI:58189"/>
        <dbReference type="EC" id="3.6.5.3"/>
    </reaction>
    <physiologicalReaction direction="left-to-right" evidence="2">
        <dbReference type="Rhea" id="RHEA:19670"/>
    </physiologicalReaction>
</comment>
<comment type="subunit">
    <text evidence="2">Monomer.</text>
</comment>
<comment type="subcellular location">
    <subcellularLocation>
        <location evidence="2">Cytoplasm</location>
    </subcellularLocation>
</comment>
<comment type="similarity">
    <text evidence="2">Belongs to the TRAFAC class translation factor GTPase superfamily. Classic translation factor GTPase family. EF-Tu/EF-1A subfamily.</text>
</comment>
<comment type="sequence caution" evidence="3">
    <conflict type="erroneous initiation">
        <sequence resource="EMBL-CDS" id="ABF33567"/>
    </conflict>
</comment>
<name>EFTU_STRPD</name>
<dbReference type="EC" id="3.6.5.3" evidence="2"/>
<dbReference type="EMBL" id="CP000260">
    <property type="protein sequence ID" value="ABF33567.1"/>
    <property type="status" value="ALT_INIT"/>
    <property type="molecule type" value="Genomic_DNA"/>
</dbReference>
<dbReference type="RefSeq" id="WP_002990541.1">
    <property type="nucleotide sequence ID" value="NZ_CVUH01000002.1"/>
</dbReference>
<dbReference type="SMR" id="Q1JHV6"/>
<dbReference type="KEGG" id="sph:MGAS10270_Spy0502"/>
<dbReference type="HOGENOM" id="CLU_007265_0_1_9"/>
<dbReference type="Proteomes" id="UP000002436">
    <property type="component" value="Chromosome"/>
</dbReference>
<dbReference type="GO" id="GO:0005829">
    <property type="term" value="C:cytosol"/>
    <property type="evidence" value="ECO:0007669"/>
    <property type="project" value="TreeGrafter"/>
</dbReference>
<dbReference type="GO" id="GO:0005525">
    <property type="term" value="F:GTP binding"/>
    <property type="evidence" value="ECO:0007669"/>
    <property type="project" value="UniProtKB-UniRule"/>
</dbReference>
<dbReference type="GO" id="GO:0003924">
    <property type="term" value="F:GTPase activity"/>
    <property type="evidence" value="ECO:0007669"/>
    <property type="project" value="InterPro"/>
</dbReference>
<dbReference type="GO" id="GO:0003746">
    <property type="term" value="F:translation elongation factor activity"/>
    <property type="evidence" value="ECO:0007669"/>
    <property type="project" value="UniProtKB-UniRule"/>
</dbReference>
<dbReference type="CDD" id="cd01884">
    <property type="entry name" value="EF_Tu"/>
    <property type="match status" value="1"/>
</dbReference>
<dbReference type="CDD" id="cd03697">
    <property type="entry name" value="EFTU_II"/>
    <property type="match status" value="1"/>
</dbReference>
<dbReference type="CDD" id="cd03707">
    <property type="entry name" value="EFTU_III"/>
    <property type="match status" value="1"/>
</dbReference>
<dbReference type="FunFam" id="2.40.30.10:FF:000001">
    <property type="entry name" value="Elongation factor Tu"/>
    <property type="match status" value="1"/>
</dbReference>
<dbReference type="FunFam" id="3.40.50.300:FF:000003">
    <property type="entry name" value="Elongation factor Tu"/>
    <property type="match status" value="1"/>
</dbReference>
<dbReference type="Gene3D" id="3.40.50.300">
    <property type="entry name" value="P-loop containing nucleotide triphosphate hydrolases"/>
    <property type="match status" value="1"/>
</dbReference>
<dbReference type="Gene3D" id="2.40.30.10">
    <property type="entry name" value="Translation factors"/>
    <property type="match status" value="2"/>
</dbReference>
<dbReference type="HAMAP" id="MF_00118_B">
    <property type="entry name" value="EF_Tu_B"/>
    <property type="match status" value="1"/>
</dbReference>
<dbReference type="InterPro" id="IPR041709">
    <property type="entry name" value="EF-Tu_GTP-bd"/>
</dbReference>
<dbReference type="InterPro" id="IPR050055">
    <property type="entry name" value="EF-Tu_GTPase"/>
</dbReference>
<dbReference type="InterPro" id="IPR004161">
    <property type="entry name" value="EFTu-like_2"/>
</dbReference>
<dbReference type="InterPro" id="IPR033720">
    <property type="entry name" value="EFTU_2"/>
</dbReference>
<dbReference type="InterPro" id="IPR031157">
    <property type="entry name" value="G_TR_CS"/>
</dbReference>
<dbReference type="InterPro" id="IPR027417">
    <property type="entry name" value="P-loop_NTPase"/>
</dbReference>
<dbReference type="InterPro" id="IPR005225">
    <property type="entry name" value="Small_GTP-bd"/>
</dbReference>
<dbReference type="InterPro" id="IPR000795">
    <property type="entry name" value="T_Tr_GTP-bd_dom"/>
</dbReference>
<dbReference type="InterPro" id="IPR009000">
    <property type="entry name" value="Transl_B-barrel_sf"/>
</dbReference>
<dbReference type="InterPro" id="IPR009001">
    <property type="entry name" value="Transl_elong_EF1A/Init_IF2_C"/>
</dbReference>
<dbReference type="InterPro" id="IPR004541">
    <property type="entry name" value="Transl_elong_EFTu/EF1A_bac/org"/>
</dbReference>
<dbReference type="InterPro" id="IPR004160">
    <property type="entry name" value="Transl_elong_EFTu/EF1A_C"/>
</dbReference>
<dbReference type="NCBIfam" id="TIGR00485">
    <property type="entry name" value="EF-Tu"/>
    <property type="match status" value="1"/>
</dbReference>
<dbReference type="NCBIfam" id="NF000766">
    <property type="entry name" value="PRK00049.1"/>
    <property type="match status" value="1"/>
</dbReference>
<dbReference type="NCBIfam" id="NF009372">
    <property type="entry name" value="PRK12735.1"/>
    <property type="match status" value="1"/>
</dbReference>
<dbReference type="NCBIfam" id="NF009373">
    <property type="entry name" value="PRK12736.1"/>
    <property type="match status" value="1"/>
</dbReference>
<dbReference type="NCBIfam" id="TIGR00231">
    <property type="entry name" value="small_GTP"/>
    <property type="match status" value="1"/>
</dbReference>
<dbReference type="PANTHER" id="PTHR43721:SF22">
    <property type="entry name" value="ELONGATION FACTOR TU, MITOCHONDRIAL"/>
    <property type="match status" value="1"/>
</dbReference>
<dbReference type="PANTHER" id="PTHR43721">
    <property type="entry name" value="ELONGATION FACTOR TU-RELATED"/>
    <property type="match status" value="1"/>
</dbReference>
<dbReference type="Pfam" id="PF00009">
    <property type="entry name" value="GTP_EFTU"/>
    <property type="match status" value="1"/>
</dbReference>
<dbReference type="Pfam" id="PF03144">
    <property type="entry name" value="GTP_EFTU_D2"/>
    <property type="match status" value="1"/>
</dbReference>
<dbReference type="Pfam" id="PF03143">
    <property type="entry name" value="GTP_EFTU_D3"/>
    <property type="match status" value="1"/>
</dbReference>
<dbReference type="PRINTS" id="PR00315">
    <property type="entry name" value="ELONGATNFCT"/>
</dbReference>
<dbReference type="SUPFAM" id="SSF50465">
    <property type="entry name" value="EF-Tu/eEF-1alpha/eIF2-gamma C-terminal domain"/>
    <property type="match status" value="1"/>
</dbReference>
<dbReference type="SUPFAM" id="SSF52540">
    <property type="entry name" value="P-loop containing nucleoside triphosphate hydrolases"/>
    <property type="match status" value="1"/>
</dbReference>
<dbReference type="SUPFAM" id="SSF50447">
    <property type="entry name" value="Translation proteins"/>
    <property type="match status" value="1"/>
</dbReference>
<dbReference type="PROSITE" id="PS00301">
    <property type="entry name" value="G_TR_1"/>
    <property type="match status" value="1"/>
</dbReference>
<dbReference type="PROSITE" id="PS51722">
    <property type="entry name" value="G_TR_2"/>
    <property type="match status" value="1"/>
</dbReference>
<evidence type="ECO:0000250" key="1"/>
<evidence type="ECO:0000255" key="2">
    <source>
        <dbReference type="HAMAP-Rule" id="MF_00118"/>
    </source>
</evidence>
<evidence type="ECO:0000305" key="3"/>
<reference key="1">
    <citation type="journal article" date="2006" name="Proc. Natl. Acad. Sci. U.S.A.">
        <title>Molecular genetic anatomy of inter- and intraserotype variation in the human bacterial pathogen group A Streptococcus.</title>
        <authorList>
            <person name="Beres S.B."/>
            <person name="Richter E.W."/>
            <person name="Nagiec M.J."/>
            <person name="Sumby P."/>
            <person name="Porcella S.F."/>
            <person name="DeLeo F.R."/>
            <person name="Musser J.M."/>
        </authorList>
    </citation>
    <scope>NUCLEOTIDE SEQUENCE [LARGE SCALE GENOMIC DNA]</scope>
    <source>
        <strain>MGAS10270</strain>
    </source>
</reference>
<sequence>MAKEKYDRSKPHVNIGTIGHVDHGKTTLTAAITTVLARRLPSSVNQPKDYASIDAAPEERERGITINTAHVEYETATRHYAHIDAPGHADYVKNMITGAAQMDGAILVVASTDGPMPQTREHILLSRQVGVKHLIVFMNKVDLVDDEELLELVEMEIRDLLSEYDFPGDDLPVIQGSALKALEGDTKFEDIIMELMDTVDSYIPEPERDTDKPLLLPVEDVFSITGRGTVASGRIDRGTVRVNDEIEIVGIKEETKKAVVTGVEMFRKQLDEGLAGDNVGILLRGVQRDEIERGQVIAKPGSINPHTKFKGEVYILSKDEGGRHTPFFNNYRPQFYFRTTDVTGSIELPAGTEMVMPGDNVTINVELIHPIAVEQGTTFSIREGGRTVGSGIVSEIEA</sequence>
<protein>
    <recommendedName>
        <fullName evidence="2">Elongation factor Tu</fullName>
        <shortName evidence="2">EF-Tu</shortName>
        <ecNumber evidence="2">3.6.5.3</ecNumber>
    </recommendedName>
</protein>
<organism>
    <name type="scientific">Streptococcus pyogenes serotype M2 (strain MGAS10270)</name>
    <dbReference type="NCBI Taxonomy" id="370552"/>
    <lineage>
        <taxon>Bacteria</taxon>
        <taxon>Bacillati</taxon>
        <taxon>Bacillota</taxon>
        <taxon>Bacilli</taxon>
        <taxon>Lactobacillales</taxon>
        <taxon>Streptococcaceae</taxon>
        <taxon>Streptococcus</taxon>
    </lineage>
</organism>